<protein>
    <recommendedName>
        <fullName>Polyadenylate-binding protein-interacting protein 12</fullName>
        <shortName>PABP-interacting protein 12</shortName>
        <shortName>Poly(A)-binding protein-interacting protein 12</shortName>
    </recommendedName>
    <alternativeName>
        <fullName>PAM2-containing protein CID12</fullName>
    </alternativeName>
    <alternativeName>
        <fullName>Protein CTC-INTERACTING DOMAIN 12</fullName>
    </alternativeName>
    <alternativeName>
        <fullName>RNA-binding protein 37</fullName>
        <shortName>AtRBP37</shortName>
    </alternativeName>
</protein>
<name>CID12_ARATH</name>
<gene>
    <name type="primary">CID12</name>
    <name type="synonym">RBP37</name>
    <name type="ordered locus">At4g10610</name>
    <name type="ORF">F3H7.12</name>
    <name type="ORF">T4F9.70</name>
</gene>
<dbReference type="EMBL" id="U44134">
    <property type="protein sequence ID" value="AAA86641.1"/>
    <property type="molecule type" value="mRNA"/>
</dbReference>
<dbReference type="EMBL" id="AF109721">
    <property type="protein sequence ID" value="AAD34325.1"/>
    <property type="molecule type" value="Genomic_DNA"/>
</dbReference>
<dbReference type="EMBL" id="AF118222">
    <property type="protein sequence ID" value="AAD03436.1"/>
    <property type="molecule type" value="Genomic_DNA"/>
</dbReference>
<dbReference type="EMBL" id="AL049523">
    <property type="protein sequence ID" value="CAB40027.1"/>
    <property type="molecule type" value="Genomic_DNA"/>
</dbReference>
<dbReference type="EMBL" id="AL161517">
    <property type="protein sequence ID" value="CAB78184.1"/>
    <property type="molecule type" value="Genomic_DNA"/>
</dbReference>
<dbReference type="EMBL" id="CP002687">
    <property type="protein sequence ID" value="AEE82907.1"/>
    <property type="molecule type" value="Genomic_DNA"/>
</dbReference>
<dbReference type="EMBL" id="AY039599">
    <property type="protein sequence ID" value="AAK62654.1"/>
    <property type="molecule type" value="mRNA"/>
</dbReference>
<dbReference type="EMBL" id="AY078011">
    <property type="protein sequence ID" value="AAL77712.1"/>
    <property type="molecule type" value="mRNA"/>
</dbReference>
<dbReference type="EMBL" id="AY086286">
    <property type="protein sequence ID" value="AAM64358.1"/>
    <property type="molecule type" value="mRNA"/>
</dbReference>
<dbReference type="PIR" id="T04196">
    <property type="entry name" value="T04196"/>
</dbReference>
<dbReference type="RefSeq" id="NP_192799.1">
    <molecule id="Q9S7N9-1"/>
    <property type="nucleotide sequence ID" value="NM_117129.3"/>
</dbReference>
<dbReference type="SMR" id="Q9S7N9"/>
<dbReference type="BioGRID" id="11952">
    <property type="interactions" value="2"/>
</dbReference>
<dbReference type="FunCoup" id="Q9S7N9">
    <property type="interactions" value="1218"/>
</dbReference>
<dbReference type="STRING" id="3702.Q9S7N9"/>
<dbReference type="iPTMnet" id="Q9S7N9"/>
<dbReference type="PaxDb" id="3702-AT4G10610.1"/>
<dbReference type="ProteomicsDB" id="246939">
    <molecule id="Q9S7N9-1"/>
</dbReference>
<dbReference type="EnsemblPlants" id="AT4G10610.1">
    <molecule id="Q9S7N9-1"/>
    <property type="protein sequence ID" value="AT4G10610.1"/>
    <property type="gene ID" value="AT4G10610"/>
</dbReference>
<dbReference type="GeneID" id="826653"/>
<dbReference type="Gramene" id="AT4G10610.1">
    <molecule id="Q9S7N9-1"/>
    <property type="protein sequence ID" value="AT4G10610.1"/>
    <property type="gene ID" value="AT4G10610"/>
</dbReference>
<dbReference type="KEGG" id="ath:AT4G10610"/>
<dbReference type="Araport" id="AT4G10610"/>
<dbReference type="TAIR" id="AT4G10610">
    <property type="gene designation" value="CID12"/>
</dbReference>
<dbReference type="eggNOG" id="KOG0118">
    <property type="taxonomic scope" value="Eukaryota"/>
</dbReference>
<dbReference type="HOGENOM" id="CLU_042473_2_0_1"/>
<dbReference type="InParanoid" id="Q9S7N9"/>
<dbReference type="OMA" id="NGHANEN"/>
<dbReference type="OrthoDB" id="7763451at2759"/>
<dbReference type="PhylomeDB" id="Q9S7N9"/>
<dbReference type="PRO" id="PR:Q9S7N9"/>
<dbReference type="Proteomes" id="UP000006548">
    <property type="component" value="Chromosome 4"/>
</dbReference>
<dbReference type="ExpressionAtlas" id="Q9S7N9">
    <property type="expression patterns" value="baseline and differential"/>
</dbReference>
<dbReference type="GO" id="GO:0005634">
    <property type="term" value="C:nucleus"/>
    <property type="evidence" value="ECO:0007669"/>
    <property type="project" value="UniProtKB-SubCell"/>
</dbReference>
<dbReference type="GO" id="GO:0003729">
    <property type="term" value="F:mRNA binding"/>
    <property type="evidence" value="ECO:0000314"/>
    <property type="project" value="TAIR"/>
</dbReference>
<dbReference type="GO" id="GO:0000166">
    <property type="term" value="F:nucleotide binding"/>
    <property type="evidence" value="ECO:0007669"/>
    <property type="project" value="UniProtKB-KW"/>
</dbReference>
<dbReference type="GO" id="GO:0003723">
    <property type="term" value="F:RNA binding"/>
    <property type="evidence" value="ECO:0000314"/>
    <property type="project" value="TAIR"/>
</dbReference>
<dbReference type="CDD" id="cd12459">
    <property type="entry name" value="RRM1_CID8_like"/>
    <property type="match status" value="1"/>
</dbReference>
<dbReference type="CDD" id="cd12460">
    <property type="entry name" value="RRM2_CID8_like"/>
    <property type="match status" value="1"/>
</dbReference>
<dbReference type="FunFam" id="3.30.70.330:FF:000665">
    <property type="entry name" value="Polyadenylate-binding protein-interacting protein 10"/>
    <property type="match status" value="1"/>
</dbReference>
<dbReference type="FunFam" id="3.30.70.330:FF:000530">
    <property type="entry name" value="Polyadenylate-binding protein-interacting protein 11"/>
    <property type="match status" value="1"/>
</dbReference>
<dbReference type="Gene3D" id="3.30.70.330">
    <property type="match status" value="2"/>
</dbReference>
<dbReference type="InterPro" id="IPR034823">
    <property type="entry name" value="CID8-like_RRM1"/>
</dbReference>
<dbReference type="InterPro" id="IPR034825">
    <property type="entry name" value="CID8-like_RRM2"/>
</dbReference>
<dbReference type="InterPro" id="IPR012677">
    <property type="entry name" value="Nucleotide-bd_a/b_plait_sf"/>
</dbReference>
<dbReference type="InterPro" id="IPR009818">
    <property type="entry name" value="PAM2_motif"/>
</dbReference>
<dbReference type="InterPro" id="IPR035979">
    <property type="entry name" value="RBD_domain_sf"/>
</dbReference>
<dbReference type="InterPro" id="IPR000504">
    <property type="entry name" value="RRM_dom"/>
</dbReference>
<dbReference type="PANTHER" id="PTHR32343:SF30">
    <property type="entry name" value="POLYADENYLATE-BINDING PROTEIN-INTERACTING PROTEIN 12"/>
    <property type="match status" value="1"/>
</dbReference>
<dbReference type="PANTHER" id="PTHR32343">
    <property type="entry name" value="SERINE/ARGININE-RICH SPLICING FACTOR"/>
    <property type="match status" value="1"/>
</dbReference>
<dbReference type="Pfam" id="PF07145">
    <property type="entry name" value="PAM2"/>
    <property type="match status" value="1"/>
</dbReference>
<dbReference type="Pfam" id="PF00076">
    <property type="entry name" value="RRM_1"/>
    <property type="match status" value="2"/>
</dbReference>
<dbReference type="SMART" id="SM00360">
    <property type="entry name" value="RRM"/>
    <property type="match status" value="2"/>
</dbReference>
<dbReference type="SUPFAM" id="SSF54928">
    <property type="entry name" value="RNA-binding domain, RBD"/>
    <property type="match status" value="2"/>
</dbReference>
<dbReference type="PROSITE" id="PS50102">
    <property type="entry name" value="RRM"/>
    <property type="match status" value="2"/>
</dbReference>
<organism>
    <name type="scientific">Arabidopsis thaliana</name>
    <name type="common">Mouse-ear cress</name>
    <dbReference type="NCBI Taxonomy" id="3702"/>
    <lineage>
        <taxon>Eukaryota</taxon>
        <taxon>Viridiplantae</taxon>
        <taxon>Streptophyta</taxon>
        <taxon>Embryophyta</taxon>
        <taxon>Tracheophyta</taxon>
        <taxon>Spermatophyta</taxon>
        <taxon>Magnoliopsida</taxon>
        <taxon>eudicotyledons</taxon>
        <taxon>Gunneridae</taxon>
        <taxon>Pentapetalae</taxon>
        <taxon>rosids</taxon>
        <taxon>malvids</taxon>
        <taxon>Brassicales</taxon>
        <taxon>Brassicaceae</taxon>
        <taxon>Camelineae</taxon>
        <taxon>Arabidopsis</taxon>
    </lineage>
</organism>
<keyword id="KW-0025">Alternative splicing</keyword>
<keyword id="KW-0547">Nucleotide-binding</keyword>
<keyword id="KW-0539">Nucleus</keyword>
<keyword id="KW-1185">Reference proteome</keyword>
<keyword id="KW-0677">Repeat</keyword>
<keyword id="KW-0694">RNA-binding</keyword>
<feature type="chain" id="PRO_0000428902" description="Polyadenylate-binding protein-interacting protein 12">
    <location>
        <begin position="1"/>
        <end position="336"/>
    </location>
</feature>
<feature type="domain" description="RRM 1" evidence="2">
    <location>
        <begin position="150"/>
        <end position="225"/>
    </location>
</feature>
<feature type="domain" description="RRM 2" evidence="2">
    <location>
        <begin position="247"/>
        <end position="323"/>
    </location>
</feature>
<feature type="region of interest" description="Disordered" evidence="3">
    <location>
        <begin position="14"/>
        <end position="47"/>
    </location>
</feature>
<feature type="short sequence motif" description="PAM2-like">
    <location>
        <begin position="75"/>
        <end position="85"/>
    </location>
</feature>
<feature type="short sequence motif" description="Bipartite nuclear localization signal" evidence="1">
    <location>
        <begin position="122"/>
        <end position="134"/>
    </location>
</feature>
<feature type="compositionally biased region" description="Polar residues" evidence="3">
    <location>
        <begin position="25"/>
        <end position="40"/>
    </location>
</feature>
<feature type="sequence conflict" description="In Ref. 1; AAA86641." evidence="7" ref="1">
    <original>D</original>
    <variation>Y</variation>
    <location>
        <position position="158"/>
    </location>
</feature>
<feature type="sequence conflict" description="In Ref. 1; AAA86641." evidence="7" ref="1">
    <original>A</original>
    <variation>G</variation>
    <location>
        <position position="302"/>
    </location>
</feature>
<comment type="function">
    <text evidence="6">Binds nucleotic acids in vitro.</text>
</comment>
<comment type="subunit">
    <text evidence="5">Interacts with MPC.</text>
</comment>
<comment type="subcellular location">
    <subcellularLocation>
        <location evidence="7">Nucleus</location>
    </subcellularLocation>
</comment>
<comment type="alternative products">
    <event type="alternative splicing"/>
    <isoform>
        <id>Q9S7N9-1</id>
        <name>1</name>
        <sequence type="displayed"/>
    </isoform>
    <text>A number of isoforms are produced. According to EST sequences.</text>
</comment>
<comment type="tissue specificity">
    <text evidence="4 6">Expressed in roots, leaves, stems, flowers and siliques. Detected in flowers only in growing organs: gynoecium, petals, stamenal filaments, anther walls and ovules.</text>
</comment>
<comment type="developmental stage">
    <text evidence="6">Expressed during early-embryogenesis in the embryo proper and the suspensor up to late heart stage. Expression is not detected in the embryo during maturation.</text>
</comment>
<comment type="domain">
    <text>Contains a PAM2-like motif, which seems to be involved in the binding to the PABC/CTC domain of PAB proteins.</text>
</comment>
<evidence type="ECO:0000255" key="1"/>
<evidence type="ECO:0000255" key="2">
    <source>
        <dbReference type="PROSITE-ProRule" id="PRU00176"/>
    </source>
</evidence>
<evidence type="ECO:0000256" key="3">
    <source>
        <dbReference type="SAM" id="MobiDB-lite"/>
    </source>
</evidence>
<evidence type="ECO:0000269" key="4">
    <source>
    </source>
</evidence>
<evidence type="ECO:0000269" key="5">
    <source>
    </source>
</evidence>
<evidence type="ECO:0000269" key="6">
    <source>
    </source>
</evidence>
<evidence type="ECO:0000305" key="7"/>
<proteinExistence type="evidence at protein level"/>
<accession>Q9S7N9</accession>
<accession>Q38915</accession>
<reference key="1">
    <citation type="journal article" date="1997" name="Plant Mol. Biol.">
        <title>A new Arabidopsis nucleic-acid-binding protein gene is highly expressed in dividing cells during development.</title>
        <authorList>
            <person name="Hecht V."/>
            <person name="Stiefel V."/>
            <person name="Delseny M."/>
            <person name="Gallois P."/>
        </authorList>
    </citation>
    <scope>NUCLEOTIDE SEQUENCE [GENOMIC DNA / MRNA]</scope>
    <scope>FUNCTION</scope>
    <scope>TISSUE SPECIFICITY</scope>
    <scope>DEVELOPMENTAL STAGE</scope>
    <source>
        <strain>cv. Columbia</strain>
        <tissue>Silique</tissue>
    </source>
</reference>
<reference key="2">
    <citation type="journal article" date="1999" name="Nature">
        <title>Sequence and analysis of chromosome 4 of the plant Arabidopsis thaliana.</title>
        <authorList>
            <person name="Mayer K.F.X."/>
            <person name="Schueller C."/>
            <person name="Wambutt R."/>
            <person name="Murphy G."/>
            <person name="Volckaert G."/>
            <person name="Pohl T."/>
            <person name="Duesterhoeft A."/>
            <person name="Stiekema W."/>
            <person name="Entian K.-D."/>
            <person name="Terryn N."/>
            <person name="Harris B."/>
            <person name="Ansorge W."/>
            <person name="Brandt P."/>
            <person name="Grivell L.A."/>
            <person name="Rieger M."/>
            <person name="Weichselgartner M."/>
            <person name="de Simone V."/>
            <person name="Obermaier B."/>
            <person name="Mache R."/>
            <person name="Mueller M."/>
            <person name="Kreis M."/>
            <person name="Delseny M."/>
            <person name="Puigdomenech P."/>
            <person name="Watson M."/>
            <person name="Schmidtheini T."/>
            <person name="Reichert B."/>
            <person name="Portetelle D."/>
            <person name="Perez-Alonso M."/>
            <person name="Boutry M."/>
            <person name="Bancroft I."/>
            <person name="Vos P."/>
            <person name="Hoheisel J."/>
            <person name="Zimmermann W."/>
            <person name="Wedler H."/>
            <person name="Ridley P."/>
            <person name="Langham S.-A."/>
            <person name="McCullagh B."/>
            <person name="Bilham L."/>
            <person name="Robben J."/>
            <person name="van der Schueren J."/>
            <person name="Grymonprez B."/>
            <person name="Chuang Y.-J."/>
            <person name="Vandenbussche F."/>
            <person name="Braeken M."/>
            <person name="Weltjens I."/>
            <person name="Voet M."/>
            <person name="Bastiaens I."/>
            <person name="Aert R."/>
            <person name="Defoor E."/>
            <person name="Weitzenegger T."/>
            <person name="Bothe G."/>
            <person name="Ramsperger U."/>
            <person name="Hilbert H."/>
            <person name="Braun M."/>
            <person name="Holzer E."/>
            <person name="Brandt A."/>
            <person name="Peters S."/>
            <person name="van Staveren M."/>
            <person name="Dirkse W."/>
            <person name="Mooijman P."/>
            <person name="Klein Lankhorst R."/>
            <person name="Rose M."/>
            <person name="Hauf J."/>
            <person name="Koetter P."/>
            <person name="Berneiser S."/>
            <person name="Hempel S."/>
            <person name="Feldpausch M."/>
            <person name="Lamberth S."/>
            <person name="Van den Daele H."/>
            <person name="De Keyser A."/>
            <person name="Buysshaert C."/>
            <person name="Gielen J."/>
            <person name="Villarroel R."/>
            <person name="De Clercq R."/>
            <person name="van Montagu M."/>
            <person name="Rogers J."/>
            <person name="Cronin A."/>
            <person name="Quail M.A."/>
            <person name="Bray-Allen S."/>
            <person name="Clark L."/>
            <person name="Doggett J."/>
            <person name="Hall S."/>
            <person name="Kay M."/>
            <person name="Lennard N."/>
            <person name="McLay K."/>
            <person name="Mayes R."/>
            <person name="Pettett A."/>
            <person name="Rajandream M.A."/>
            <person name="Lyne M."/>
            <person name="Benes V."/>
            <person name="Rechmann S."/>
            <person name="Borkova D."/>
            <person name="Bloecker H."/>
            <person name="Scharfe M."/>
            <person name="Grimm M."/>
            <person name="Loehnert T.-H."/>
            <person name="Dose S."/>
            <person name="de Haan M."/>
            <person name="Maarse A.C."/>
            <person name="Schaefer M."/>
            <person name="Mueller-Auer S."/>
            <person name="Gabel C."/>
            <person name="Fuchs M."/>
            <person name="Fartmann B."/>
            <person name="Granderath K."/>
            <person name="Dauner D."/>
            <person name="Herzl A."/>
            <person name="Neumann S."/>
            <person name="Argiriou A."/>
            <person name="Vitale D."/>
            <person name="Liguori R."/>
            <person name="Piravandi E."/>
            <person name="Massenet O."/>
            <person name="Quigley F."/>
            <person name="Clabauld G."/>
            <person name="Muendlein A."/>
            <person name="Felber R."/>
            <person name="Schnabl S."/>
            <person name="Hiller R."/>
            <person name="Schmidt W."/>
            <person name="Lecharny A."/>
            <person name="Aubourg S."/>
            <person name="Chefdor F."/>
            <person name="Cooke R."/>
            <person name="Berger C."/>
            <person name="Monfort A."/>
            <person name="Casacuberta E."/>
            <person name="Gibbons T."/>
            <person name="Weber N."/>
            <person name="Vandenbol M."/>
            <person name="Bargues M."/>
            <person name="Terol J."/>
            <person name="Torres A."/>
            <person name="Perez-Perez A."/>
            <person name="Purnelle B."/>
            <person name="Bent E."/>
            <person name="Johnson S."/>
            <person name="Tacon D."/>
            <person name="Jesse T."/>
            <person name="Heijnen L."/>
            <person name="Schwarz S."/>
            <person name="Scholler P."/>
            <person name="Heber S."/>
            <person name="Francs P."/>
            <person name="Bielke C."/>
            <person name="Frishman D."/>
            <person name="Haase D."/>
            <person name="Lemcke K."/>
            <person name="Mewes H.-W."/>
            <person name="Stocker S."/>
            <person name="Zaccaria P."/>
            <person name="Bevan M."/>
            <person name="Wilson R.K."/>
            <person name="de la Bastide M."/>
            <person name="Habermann K."/>
            <person name="Parnell L."/>
            <person name="Dedhia N."/>
            <person name="Gnoj L."/>
            <person name="Schutz K."/>
            <person name="Huang E."/>
            <person name="Spiegel L."/>
            <person name="Sekhon M."/>
            <person name="Murray J."/>
            <person name="Sheet P."/>
            <person name="Cordes M."/>
            <person name="Abu-Threideh J."/>
            <person name="Stoneking T."/>
            <person name="Kalicki J."/>
            <person name="Graves T."/>
            <person name="Harmon G."/>
            <person name="Edwards J."/>
            <person name="Latreille P."/>
            <person name="Courtney L."/>
            <person name="Cloud J."/>
            <person name="Abbott A."/>
            <person name="Scott K."/>
            <person name="Johnson D."/>
            <person name="Minx P."/>
            <person name="Bentley D."/>
            <person name="Fulton B."/>
            <person name="Miller N."/>
            <person name="Greco T."/>
            <person name="Kemp K."/>
            <person name="Kramer J."/>
            <person name="Fulton L."/>
            <person name="Mardis E."/>
            <person name="Dante M."/>
            <person name="Pepin K."/>
            <person name="Hillier L.W."/>
            <person name="Nelson J."/>
            <person name="Spieth J."/>
            <person name="Ryan E."/>
            <person name="Andrews S."/>
            <person name="Geisel C."/>
            <person name="Layman D."/>
            <person name="Du H."/>
            <person name="Ali J."/>
            <person name="Berghoff A."/>
            <person name="Jones K."/>
            <person name="Drone K."/>
            <person name="Cotton M."/>
            <person name="Joshu C."/>
            <person name="Antonoiu B."/>
            <person name="Zidanic M."/>
            <person name="Strong C."/>
            <person name="Sun H."/>
            <person name="Lamar B."/>
            <person name="Yordan C."/>
            <person name="Ma P."/>
            <person name="Zhong J."/>
            <person name="Preston R."/>
            <person name="Vil D."/>
            <person name="Shekher M."/>
            <person name="Matero A."/>
            <person name="Shah R."/>
            <person name="Swaby I.K."/>
            <person name="O'Shaughnessy A."/>
            <person name="Rodriguez M."/>
            <person name="Hoffman J."/>
            <person name="Till S."/>
            <person name="Granat S."/>
            <person name="Shohdy N."/>
            <person name="Hasegawa A."/>
            <person name="Hameed A."/>
            <person name="Lodhi M."/>
            <person name="Johnson A."/>
            <person name="Chen E."/>
            <person name="Marra M.A."/>
            <person name="Martienssen R."/>
            <person name="McCombie W.R."/>
        </authorList>
    </citation>
    <scope>NUCLEOTIDE SEQUENCE [LARGE SCALE GENOMIC DNA]</scope>
    <source>
        <strain>cv. Columbia</strain>
    </source>
</reference>
<reference key="3">
    <citation type="journal article" date="2017" name="Plant J.">
        <title>Araport11: a complete reannotation of the Arabidopsis thaliana reference genome.</title>
        <authorList>
            <person name="Cheng C.Y."/>
            <person name="Krishnakumar V."/>
            <person name="Chan A.P."/>
            <person name="Thibaud-Nissen F."/>
            <person name="Schobel S."/>
            <person name="Town C.D."/>
        </authorList>
    </citation>
    <scope>GENOME REANNOTATION</scope>
    <source>
        <strain>cv. Columbia</strain>
    </source>
</reference>
<reference key="4">
    <citation type="journal article" date="2003" name="Science">
        <title>Empirical analysis of transcriptional activity in the Arabidopsis genome.</title>
        <authorList>
            <person name="Yamada K."/>
            <person name="Lim J."/>
            <person name="Dale J.M."/>
            <person name="Chen H."/>
            <person name="Shinn P."/>
            <person name="Palm C.J."/>
            <person name="Southwick A.M."/>
            <person name="Wu H.C."/>
            <person name="Kim C.J."/>
            <person name="Nguyen M."/>
            <person name="Pham P.K."/>
            <person name="Cheuk R.F."/>
            <person name="Karlin-Newmann G."/>
            <person name="Liu S.X."/>
            <person name="Lam B."/>
            <person name="Sakano H."/>
            <person name="Wu T."/>
            <person name="Yu G."/>
            <person name="Miranda M."/>
            <person name="Quach H.L."/>
            <person name="Tripp M."/>
            <person name="Chang C.H."/>
            <person name="Lee J.M."/>
            <person name="Toriumi M.J."/>
            <person name="Chan M.M."/>
            <person name="Tang C.C."/>
            <person name="Onodera C.S."/>
            <person name="Deng J.M."/>
            <person name="Akiyama K."/>
            <person name="Ansari Y."/>
            <person name="Arakawa T."/>
            <person name="Banh J."/>
            <person name="Banno F."/>
            <person name="Bowser L."/>
            <person name="Brooks S.Y."/>
            <person name="Carninci P."/>
            <person name="Chao Q."/>
            <person name="Choy N."/>
            <person name="Enju A."/>
            <person name="Goldsmith A.D."/>
            <person name="Gurjal M."/>
            <person name="Hansen N.F."/>
            <person name="Hayashizaki Y."/>
            <person name="Johnson-Hopson C."/>
            <person name="Hsuan V.W."/>
            <person name="Iida K."/>
            <person name="Karnes M."/>
            <person name="Khan S."/>
            <person name="Koesema E."/>
            <person name="Ishida J."/>
            <person name="Jiang P.X."/>
            <person name="Jones T."/>
            <person name="Kawai J."/>
            <person name="Kamiya A."/>
            <person name="Meyers C."/>
            <person name="Nakajima M."/>
            <person name="Narusaka M."/>
            <person name="Seki M."/>
            <person name="Sakurai T."/>
            <person name="Satou M."/>
            <person name="Tamse R."/>
            <person name="Vaysberg M."/>
            <person name="Wallender E.K."/>
            <person name="Wong C."/>
            <person name="Yamamura Y."/>
            <person name="Yuan S."/>
            <person name="Shinozaki K."/>
            <person name="Davis R.W."/>
            <person name="Theologis A."/>
            <person name="Ecker J.R."/>
        </authorList>
    </citation>
    <scope>NUCLEOTIDE SEQUENCE [LARGE SCALE MRNA]</scope>
    <source>
        <strain>cv. Columbia</strain>
    </source>
</reference>
<reference key="5">
    <citation type="submission" date="2002-03" db="EMBL/GenBank/DDBJ databases">
        <title>Full-length cDNA from Arabidopsis thaliana.</title>
        <authorList>
            <person name="Brover V.V."/>
            <person name="Troukhan M.E."/>
            <person name="Alexandrov N.A."/>
            <person name="Lu Y.-P."/>
            <person name="Flavell R.B."/>
            <person name="Feldmann K.A."/>
        </authorList>
    </citation>
    <scope>NUCLEOTIDE SEQUENCE [LARGE SCALE MRNA]</scope>
    <source>
        <strain>cv. Columbia</strain>
    </source>
</reference>
<reference key="6">
    <citation type="journal article" date="2005" name="Mol. Genet. Genomics">
        <title>Four distinct classes of proteins as interaction partners of the PABC domain of Arabidopsis thaliana Poly(A)-binding proteins.</title>
        <authorList>
            <person name="Bravo J."/>
            <person name="Aguilar-Henonin L."/>
            <person name="Olmedo G."/>
            <person name="Guzman P."/>
        </authorList>
    </citation>
    <scope>GENE FAMILY</scope>
    <scope>PAM2 MOTIF</scope>
    <scope>TISSUE SPECIFICITY</scope>
</reference>
<reference key="7">
    <citation type="journal article" date="2008" name="Plant Cell">
        <title>MATERNALLY EXPRESSED PAB C-TERMINAL, a novel imprinted gene in Arabidopsis, encodes the conserved C-terminal domain of polyadenylate binding proteins.</title>
        <authorList>
            <person name="Tiwari S."/>
            <person name="Schulz R."/>
            <person name="Ikeda Y."/>
            <person name="Dytham L."/>
            <person name="Bravo J."/>
            <person name="Mathers L."/>
            <person name="Spielman M."/>
            <person name="Guzman P."/>
            <person name="Oakey R.J."/>
            <person name="Kinoshita T."/>
            <person name="Scott R.J."/>
        </authorList>
    </citation>
    <scope>INTERACTION WITH MPC</scope>
</reference>
<sequence length="336" mass="36780">MAVIESVGANTTVEAGGLISPSPPSSVTSQESGASSNNDHGGNGIHDEIGVHVARSDGGESFKRDMRELHELLSKLNPMAKEFIPPSLTKPVVNGFNGGFFAVNNGFVAAGNFPVNEDGSFRRKKSFGQQGKRRMNPRTSLAQREEIIRRTVYVSDIDQQVTEEQLAGLFIGFGQVVDCRICGDPNSVLRFAFIEFTDEVGARTALNLSGTMLGFYPVKVMPSKTAIAPVNPTFLPRTEDEREMCARTIYCTNIDKKLTQTDIKLFFESVCGEVYRLRLLGDYHHPTRIGFVEFVMAESAIAALNCSGVLLGSLPIRVSPSKTPVRSRAIPRHQMH</sequence>